<organism>
    <name type="scientific">Shigella flexneri</name>
    <dbReference type="NCBI Taxonomy" id="623"/>
    <lineage>
        <taxon>Bacteria</taxon>
        <taxon>Pseudomonadati</taxon>
        <taxon>Pseudomonadota</taxon>
        <taxon>Gammaproteobacteria</taxon>
        <taxon>Enterobacterales</taxon>
        <taxon>Enterobacteriaceae</taxon>
        <taxon>Shigella</taxon>
    </lineage>
</organism>
<reference key="1">
    <citation type="journal article" date="2002" name="Nucleic Acids Res.">
        <title>Genome sequence of Shigella flexneri 2a: insights into pathogenicity through comparison with genomes of Escherichia coli K12 and O157.</title>
        <authorList>
            <person name="Jin Q."/>
            <person name="Yuan Z."/>
            <person name="Xu J."/>
            <person name="Wang Y."/>
            <person name="Shen Y."/>
            <person name="Lu W."/>
            <person name="Wang J."/>
            <person name="Liu H."/>
            <person name="Yang J."/>
            <person name="Yang F."/>
            <person name="Zhang X."/>
            <person name="Zhang J."/>
            <person name="Yang G."/>
            <person name="Wu H."/>
            <person name="Qu D."/>
            <person name="Dong J."/>
            <person name="Sun L."/>
            <person name="Xue Y."/>
            <person name="Zhao A."/>
            <person name="Gao Y."/>
            <person name="Zhu J."/>
            <person name="Kan B."/>
            <person name="Ding K."/>
            <person name="Chen S."/>
            <person name="Cheng H."/>
            <person name="Yao Z."/>
            <person name="He B."/>
            <person name="Chen R."/>
            <person name="Ma D."/>
            <person name="Qiang B."/>
            <person name="Wen Y."/>
            <person name="Hou Y."/>
            <person name="Yu J."/>
        </authorList>
    </citation>
    <scope>NUCLEOTIDE SEQUENCE [LARGE SCALE GENOMIC DNA]</scope>
    <source>
        <strain>301 / Serotype 2a</strain>
    </source>
</reference>
<reference key="2">
    <citation type="journal article" date="2003" name="Infect. Immun.">
        <title>Complete genome sequence and comparative genomics of Shigella flexneri serotype 2a strain 2457T.</title>
        <authorList>
            <person name="Wei J."/>
            <person name="Goldberg M.B."/>
            <person name="Burland V."/>
            <person name="Venkatesan M.M."/>
            <person name="Deng W."/>
            <person name="Fournier G."/>
            <person name="Mayhew G.F."/>
            <person name="Plunkett G. III"/>
            <person name="Rose D.J."/>
            <person name="Darling A."/>
            <person name="Mau B."/>
            <person name="Perna N.T."/>
            <person name="Payne S.M."/>
            <person name="Runyen-Janecky L.J."/>
            <person name="Zhou S."/>
            <person name="Schwartz D.C."/>
            <person name="Blattner F.R."/>
        </authorList>
    </citation>
    <scope>NUCLEOTIDE SEQUENCE [LARGE SCALE GENOMIC DNA]</scope>
    <source>
        <strain>ATCC 700930 / 2457T / Serotype 2a</strain>
    </source>
</reference>
<keyword id="KW-0349">Heme</keyword>
<keyword id="KW-0408">Iron</keyword>
<keyword id="KW-0456">Lyase</keyword>
<keyword id="KW-0479">Metal-binding</keyword>
<keyword id="KW-0560">Oxidoreductase</keyword>
<keyword id="KW-0574">Periplasm</keyword>
<keyword id="KW-0575">Peroxidase</keyword>
<keyword id="KW-1185">Reference proteome</keyword>
<keyword id="KW-0677">Repeat</keyword>
<keyword id="KW-0732">Signal</keyword>
<evidence type="ECO:0000250" key="1"/>
<evidence type="ECO:0000250" key="2">
    <source>
        <dbReference type="UniProtKB" id="P31545"/>
    </source>
</evidence>
<evidence type="ECO:0000255" key="3">
    <source>
        <dbReference type="PROSITE-ProRule" id="PRU00648"/>
    </source>
</evidence>
<evidence type="ECO:0000256" key="4">
    <source>
        <dbReference type="SAM" id="MobiDB-lite"/>
    </source>
</evidence>
<evidence type="ECO:0000305" key="5"/>
<sequence>MQYKDENGVNEPSRRRLLKGIGALAGSCPVAHAQKTQSAPGTLSPDARNEKQPFYGEHQAGILTPQQAAMMLVAFDVLASDKADLERLFRLLTQRFAFLSQGGAAPETPNPRLPPLDSGILGGYIAPDNLTITLSVGHSLFDERFGLAPQMPKKLQKMTRFPNDSLDAALCHGDVLLQICANTQDTVNHALRDIIKHTPDLLSVRWKREGFISDHAARSKGKETPINLLGFKDGTANPDSQNDKLMQKVVWVTADQQEPAWTIGGSYQAVRLIQFRVEFWDRTPLKEQQTIFGRDKQTGAPLGMQHEHDVPDYASDPEGKVIALDSHIRLANPRTAESESSLMLRRGYSYSLGVTNSGQLDMGLLFVCYQHDLEKGFLTVQKRLNGEALEEYVKPIGGGYFFSLPGVKDANDYLGRALLQV</sequence>
<accession>Q83LK4</accession>
<accession>Q7C248</accession>
<protein>
    <recommendedName>
        <fullName>Deferrochelatase</fullName>
        <ecNumber evidence="2">4.98.1.1</ecNumber>
    </recommendedName>
    <alternativeName>
        <fullName>Peroxidase EfeB</fullName>
        <ecNumber evidence="2">1.11.1.-</ecNumber>
    </alternativeName>
</protein>
<proteinExistence type="inferred from homology"/>
<gene>
    <name type="primary">efeB</name>
    <name type="ordered locus">SF1021</name>
    <name type="ordered locus">S1091</name>
</gene>
<dbReference type="EC" id="4.98.1.1" evidence="2"/>
<dbReference type="EC" id="1.11.1.-" evidence="2"/>
<dbReference type="EMBL" id="AE005674">
    <property type="protein sequence ID" value="AAN42647.1"/>
    <property type="molecule type" value="Genomic_DNA"/>
</dbReference>
<dbReference type="EMBL" id="AE014073">
    <property type="protein sequence ID" value="AAP16532.1"/>
    <property type="molecule type" value="Genomic_DNA"/>
</dbReference>
<dbReference type="RefSeq" id="WP_001199452.1">
    <property type="nucleotide sequence ID" value="NZ_WPGW01000205.1"/>
</dbReference>
<dbReference type="SMR" id="Q83LK4"/>
<dbReference type="STRING" id="198214.SF1021"/>
<dbReference type="PeroxiBase" id="5873">
    <property type="entry name" value="SflDyPrx01"/>
</dbReference>
<dbReference type="PaxDb" id="198214-SF1021"/>
<dbReference type="KEGG" id="sfl:SF1021"/>
<dbReference type="KEGG" id="sfx:S1091"/>
<dbReference type="PATRIC" id="fig|198214.7.peg.1185"/>
<dbReference type="HOGENOM" id="CLU_039488_0_0_6"/>
<dbReference type="Proteomes" id="UP000001006">
    <property type="component" value="Chromosome"/>
</dbReference>
<dbReference type="Proteomes" id="UP000002673">
    <property type="component" value="Chromosome"/>
</dbReference>
<dbReference type="GO" id="GO:0005829">
    <property type="term" value="C:cytosol"/>
    <property type="evidence" value="ECO:0007669"/>
    <property type="project" value="TreeGrafter"/>
</dbReference>
<dbReference type="GO" id="GO:0042597">
    <property type="term" value="C:periplasmic space"/>
    <property type="evidence" value="ECO:0007669"/>
    <property type="project" value="UniProtKB-SubCell"/>
</dbReference>
<dbReference type="GO" id="GO:0004325">
    <property type="term" value="F:ferrochelatase activity"/>
    <property type="evidence" value="ECO:0007669"/>
    <property type="project" value="RHEA"/>
</dbReference>
<dbReference type="GO" id="GO:0020037">
    <property type="term" value="F:heme binding"/>
    <property type="evidence" value="ECO:0007669"/>
    <property type="project" value="InterPro"/>
</dbReference>
<dbReference type="GO" id="GO:0046872">
    <property type="term" value="F:metal ion binding"/>
    <property type="evidence" value="ECO:0007669"/>
    <property type="project" value="UniProtKB-KW"/>
</dbReference>
<dbReference type="GO" id="GO:0004601">
    <property type="term" value="F:peroxidase activity"/>
    <property type="evidence" value="ECO:0007669"/>
    <property type="project" value="UniProtKB-KW"/>
</dbReference>
<dbReference type="GO" id="GO:0033212">
    <property type="term" value="P:iron import into cell"/>
    <property type="evidence" value="ECO:0007669"/>
    <property type="project" value="InterPro"/>
</dbReference>
<dbReference type="InterPro" id="IPR011008">
    <property type="entry name" value="Dimeric_a/b-barrel"/>
</dbReference>
<dbReference type="InterPro" id="IPR048328">
    <property type="entry name" value="Dyp_perox_C"/>
</dbReference>
<dbReference type="InterPro" id="IPR048327">
    <property type="entry name" value="Dyp_perox_N"/>
</dbReference>
<dbReference type="InterPro" id="IPR006314">
    <property type="entry name" value="Dyp_peroxidase"/>
</dbReference>
<dbReference type="InterPro" id="IPR006313">
    <property type="entry name" value="EfeB/EfeN"/>
</dbReference>
<dbReference type="InterPro" id="IPR006311">
    <property type="entry name" value="TAT_signal"/>
</dbReference>
<dbReference type="NCBIfam" id="TIGR01413">
    <property type="entry name" value="Dyp_perox_fam"/>
    <property type="match status" value="1"/>
</dbReference>
<dbReference type="NCBIfam" id="TIGR01412">
    <property type="entry name" value="tat_substr_1"/>
    <property type="match status" value="1"/>
</dbReference>
<dbReference type="PANTHER" id="PTHR30521:SF4">
    <property type="entry name" value="DEFERROCHELATASE"/>
    <property type="match status" value="1"/>
</dbReference>
<dbReference type="PANTHER" id="PTHR30521">
    <property type="entry name" value="DEFERROCHELATASE/PEROXIDASE"/>
    <property type="match status" value="1"/>
</dbReference>
<dbReference type="Pfam" id="PF20628">
    <property type="entry name" value="Dyp_perox_C"/>
    <property type="match status" value="1"/>
</dbReference>
<dbReference type="Pfam" id="PF04261">
    <property type="entry name" value="Dyp_perox_N"/>
    <property type="match status" value="1"/>
</dbReference>
<dbReference type="SUPFAM" id="SSF54909">
    <property type="entry name" value="Dimeric alpha+beta barrel"/>
    <property type="match status" value="1"/>
</dbReference>
<dbReference type="PROSITE" id="PS51404">
    <property type="entry name" value="DYP_PEROXIDASE"/>
    <property type="match status" value="1"/>
</dbReference>
<dbReference type="PROSITE" id="PS51318">
    <property type="entry name" value="TAT"/>
    <property type="match status" value="1"/>
</dbReference>
<feature type="signal peptide" description="Tat-type signal" evidence="3">
    <location>
        <begin position="1"/>
        <end position="33"/>
    </location>
</feature>
<feature type="chain" id="PRO_0000278548" description="Deferrochelatase">
    <location>
        <begin position="34"/>
        <end position="421"/>
    </location>
</feature>
<feature type="region of interest" description="Disordered" evidence="4">
    <location>
        <begin position="32"/>
        <end position="51"/>
    </location>
</feature>
<feature type="binding site" evidence="2">
    <location>
        <begin position="234"/>
        <end position="236"/>
    </location>
    <ligand>
        <name>heme b</name>
        <dbReference type="ChEBI" id="CHEBI:60344"/>
    </ligand>
</feature>
<feature type="binding site" description="proximal binding residue" evidence="2">
    <location>
        <position position="327"/>
    </location>
    <ligand>
        <name>heme b</name>
        <dbReference type="ChEBI" id="CHEBI:60344"/>
    </ligand>
    <ligandPart>
        <name>Fe</name>
        <dbReference type="ChEBI" id="CHEBI:18248"/>
    </ligandPart>
</feature>
<feature type="binding site" evidence="2">
    <location>
        <begin position="332"/>
        <end position="334"/>
    </location>
    <ligand>
        <name>heme b</name>
        <dbReference type="ChEBI" id="CHEBI:60344"/>
    </ligand>
</feature>
<feature type="binding site" evidence="2">
    <location>
        <position position="345"/>
    </location>
    <ligand>
        <name>heme b</name>
        <dbReference type="ChEBI" id="CHEBI:60344"/>
    </ligand>
</feature>
<name>EFEB_SHIFL</name>
<comment type="function">
    <text evidence="2">Involved in the recovery of exogenous heme iron. Extracts iron from heme while preserving the protoporphyrin ring intact.</text>
</comment>
<comment type="catalytic activity">
    <reaction evidence="2">
        <text>heme b + 2 H(+) = protoporphyrin IX + Fe(2+)</text>
        <dbReference type="Rhea" id="RHEA:22584"/>
        <dbReference type="ChEBI" id="CHEBI:15378"/>
        <dbReference type="ChEBI" id="CHEBI:29033"/>
        <dbReference type="ChEBI" id="CHEBI:57306"/>
        <dbReference type="ChEBI" id="CHEBI:60344"/>
        <dbReference type="EC" id="4.98.1.1"/>
    </reaction>
    <physiologicalReaction direction="left-to-right" evidence="2">
        <dbReference type="Rhea" id="RHEA:22585"/>
    </physiologicalReaction>
</comment>
<comment type="cofactor">
    <cofactor evidence="1">
        <name>heme b</name>
        <dbReference type="ChEBI" id="CHEBI:60344"/>
    </cofactor>
    <text evidence="1">Binds 1 heme b (iron(II)-protoporphyrin IX) group non-covalently per subunit.</text>
</comment>
<comment type="subunit">
    <text evidence="1">Homodimer. Part of a ferrous iron transporter composed of EfeU, EfeO and EfeB (By similarity).</text>
</comment>
<comment type="subcellular location">
    <subcellularLocation>
        <location evidence="1">Periplasm</location>
    </subcellularLocation>
</comment>
<comment type="PTM">
    <text>Predicted to be exported by the Tat system. The position of the signal peptide cleavage has not been experimentally proven.</text>
</comment>
<comment type="similarity">
    <text evidence="5">Belongs to the DyP-type peroxidase family. EfeB subfamily.</text>
</comment>